<feature type="chain" id="PRO_1000024073" description="Dihydroorotase">
    <location>
        <begin position="1"/>
        <end position="348"/>
    </location>
</feature>
<feature type="active site" evidence="1">
    <location>
        <position position="251"/>
    </location>
</feature>
<feature type="binding site" evidence="1">
    <location>
        <position position="17"/>
    </location>
    <ligand>
        <name>Zn(2+)</name>
        <dbReference type="ChEBI" id="CHEBI:29105"/>
        <label>1</label>
    </ligand>
</feature>
<feature type="binding site" evidence="1">
    <location>
        <begin position="19"/>
        <end position="21"/>
    </location>
    <ligand>
        <name>substrate</name>
    </ligand>
</feature>
<feature type="binding site" evidence="1">
    <location>
        <position position="19"/>
    </location>
    <ligand>
        <name>Zn(2+)</name>
        <dbReference type="ChEBI" id="CHEBI:29105"/>
        <label>1</label>
    </ligand>
</feature>
<feature type="binding site" evidence="1">
    <location>
        <position position="45"/>
    </location>
    <ligand>
        <name>substrate</name>
    </ligand>
</feature>
<feature type="binding site" description="via carbamate group" evidence="1">
    <location>
        <position position="103"/>
    </location>
    <ligand>
        <name>Zn(2+)</name>
        <dbReference type="ChEBI" id="CHEBI:29105"/>
        <label>1</label>
    </ligand>
</feature>
<feature type="binding site" description="via carbamate group" evidence="1">
    <location>
        <position position="103"/>
    </location>
    <ligand>
        <name>Zn(2+)</name>
        <dbReference type="ChEBI" id="CHEBI:29105"/>
        <label>2</label>
    </ligand>
</feature>
<feature type="binding site" evidence="1">
    <location>
        <position position="140"/>
    </location>
    <ligand>
        <name>substrate</name>
    </ligand>
</feature>
<feature type="binding site" evidence="1">
    <location>
        <position position="140"/>
    </location>
    <ligand>
        <name>Zn(2+)</name>
        <dbReference type="ChEBI" id="CHEBI:29105"/>
        <label>2</label>
    </ligand>
</feature>
<feature type="binding site" evidence="1">
    <location>
        <position position="178"/>
    </location>
    <ligand>
        <name>Zn(2+)</name>
        <dbReference type="ChEBI" id="CHEBI:29105"/>
        <label>2</label>
    </ligand>
</feature>
<feature type="binding site" evidence="1">
    <location>
        <position position="223"/>
    </location>
    <ligand>
        <name>substrate</name>
    </ligand>
</feature>
<feature type="binding site" evidence="1">
    <location>
        <position position="251"/>
    </location>
    <ligand>
        <name>Zn(2+)</name>
        <dbReference type="ChEBI" id="CHEBI:29105"/>
        <label>1</label>
    </ligand>
</feature>
<feature type="binding site" evidence="1">
    <location>
        <position position="255"/>
    </location>
    <ligand>
        <name>substrate</name>
    </ligand>
</feature>
<feature type="binding site" evidence="1">
    <location>
        <position position="267"/>
    </location>
    <ligand>
        <name>substrate</name>
    </ligand>
</feature>
<feature type="modified residue" description="N6-carboxylysine" evidence="1">
    <location>
        <position position="103"/>
    </location>
</feature>
<comment type="function">
    <text evidence="1">Catalyzes the reversible cyclization of carbamoyl aspartate to dihydroorotate.</text>
</comment>
<comment type="catalytic activity">
    <reaction evidence="1">
        <text>(S)-dihydroorotate + H2O = N-carbamoyl-L-aspartate + H(+)</text>
        <dbReference type="Rhea" id="RHEA:24296"/>
        <dbReference type="ChEBI" id="CHEBI:15377"/>
        <dbReference type="ChEBI" id="CHEBI:15378"/>
        <dbReference type="ChEBI" id="CHEBI:30864"/>
        <dbReference type="ChEBI" id="CHEBI:32814"/>
        <dbReference type="EC" id="3.5.2.3"/>
    </reaction>
</comment>
<comment type="cofactor">
    <cofactor evidence="1">
        <name>Zn(2+)</name>
        <dbReference type="ChEBI" id="CHEBI:29105"/>
    </cofactor>
    <text evidence="1">Binds 2 Zn(2+) ions per subunit.</text>
</comment>
<comment type="pathway">
    <text evidence="1">Pyrimidine metabolism; UMP biosynthesis via de novo pathway; (S)-dihydroorotate from bicarbonate: step 3/3.</text>
</comment>
<comment type="subunit">
    <text evidence="1">Homodimer.</text>
</comment>
<comment type="similarity">
    <text evidence="1">Belongs to the metallo-dependent hydrolases superfamily. DHOase family. Class II DHOase subfamily.</text>
</comment>
<dbReference type="EC" id="3.5.2.3" evidence="1"/>
<dbReference type="EMBL" id="AM286415">
    <property type="protein sequence ID" value="CAL11699.1"/>
    <property type="molecule type" value="Genomic_DNA"/>
</dbReference>
<dbReference type="RefSeq" id="WP_011816073.1">
    <property type="nucleotide sequence ID" value="NC_008800.1"/>
</dbReference>
<dbReference type="RefSeq" id="YP_001005914.1">
    <property type="nucleotide sequence ID" value="NC_008800.1"/>
</dbReference>
<dbReference type="SMR" id="A1JN45"/>
<dbReference type="MEROPS" id="M38.A02"/>
<dbReference type="KEGG" id="yen:YE1625"/>
<dbReference type="PATRIC" id="fig|393305.7.peg.1763"/>
<dbReference type="eggNOG" id="COG0418">
    <property type="taxonomic scope" value="Bacteria"/>
</dbReference>
<dbReference type="HOGENOM" id="CLU_041558_1_0_6"/>
<dbReference type="OrthoDB" id="9808095at2"/>
<dbReference type="UniPathway" id="UPA00070">
    <property type="reaction ID" value="UER00117"/>
</dbReference>
<dbReference type="Proteomes" id="UP000000642">
    <property type="component" value="Chromosome"/>
</dbReference>
<dbReference type="GO" id="GO:0005829">
    <property type="term" value="C:cytosol"/>
    <property type="evidence" value="ECO:0007669"/>
    <property type="project" value="TreeGrafter"/>
</dbReference>
<dbReference type="GO" id="GO:0004151">
    <property type="term" value="F:dihydroorotase activity"/>
    <property type="evidence" value="ECO:0007669"/>
    <property type="project" value="UniProtKB-UniRule"/>
</dbReference>
<dbReference type="GO" id="GO:0008270">
    <property type="term" value="F:zinc ion binding"/>
    <property type="evidence" value="ECO:0007669"/>
    <property type="project" value="UniProtKB-UniRule"/>
</dbReference>
<dbReference type="GO" id="GO:0006207">
    <property type="term" value="P:'de novo' pyrimidine nucleobase biosynthetic process"/>
    <property type="evidence" value="ECO:0007669"/>
    <property type="project" value="TreeGrafter"/>
</dbReference>
<dbReference type="GO" id="GO:0044205">
    <property type="term" value="P:'de novo' UMP biosynthetic process"/>
    <property type="evidence" value="ECO:0007669"/>
    <property type="project" value="UniProtKB-UniRule"/>
</dbReference>
<dbReference type="CDD" id="cd01294">
    <property type="entry name" value="DHOase"/>
    <property type="match status" value="1"/>
</dbReference>
<dbReference type="FunFam" id="3.20.20.140:FF:000006">
    <property type="entry name" value="Dihydroorotase"/>
    <property type="match status" value="1"/>
</dbReference>
<dbReference type="Gene3D" id="3.20.20.140">
    <property type="entry name" value="Metal-dependent hydrolases"/>
    <property type="match status" value="1"/>
</dbReference>
<dbReference type="HAMAP" id="MF_00219">
    <property type="entry name" value="PyrC_classII"/>
    <property type="match status" value="1"/>
</dbReference>
<dbReference type="InterPro" id="IPR006680">
    <property type="entry name" value="Amidohydro-rel"/>
</dbReference>
<dbReference type="InterPro" id="IPR004721">
    <property type="entry name" value="DHOdimr"/>
</dbReference>
<dbReference type="InterPro" id="IPR002195">
    <property type="entry name" value="Dihydroorotase_CS"/>
</dbReference>
<dbReference type="InterPro" id="IPR032466">
    <property type="entry name" value="Metal_Hydrolase"/>
</dbReference>
<dbReference type="NCBIfam" id="TIGR00856">
    <property type="entry name" value="pyrC_dimer"/>
    <property type="match status" value="1"/>
</dbReference>
<dbReference type="PANTHER" id="PTHR43137">
    <property type="entry name" value="DIHYDROOROTASE"/>
    <property type="match status" value="1"/>
</dbReference>
<dbReference type="PANTHER" id="PTHR43137:SF1">
    <property type="entry name" value="DIHYDROOROTASE"/>
    <property type="match status" value="1"/>
</dbReference>
<dbReference type="Pfam" id="PF01979">
    <property type="entry name" value="Amidohydro_1"/>
    <property type="match status" value="1"/>
</dbReference>
<dbReference type="PIRSF" id="PIRSF001237">
    <property type="entry name" value="DHOdimr"/>
    <property type="match status" value="1"/>
</dbReference>
<dbReference type="SUPFAM" id="SSF51556">
    <property type="entry name" value="Metallo-dependent hydrolases"/>
    <property type="match status" value="1"/>
</dbReference>
<dbReference type="PROSITE" id="PS00483">
    <property type="entry name" value="DIHYDROOROTASE_2"/>
    <property type="match status" value="1"/>
</dbReference>
<sequence>MTVQPQTLKIRRPDDWHIHLRDDEMLSTVLPYTSEVFARAIVMPNLTPPITTVASAIAYRERILAAIPAGHKFTPLMTCYLTNTLDVNELTRGFEQGVFTAAKLYPANATTNSTHGVSDIPAIYPLFEQMQKIGMPLLIHGEVTDAAVDIFDREARFIDQILEPIRRQFPELKIVFEHITTKDAADYVLAGNPFLGATITPQHLMFNRNHMLVGGIRPHLFCLPILKRSTHQDALRQAVASGSDRFFLGTDSAPHTKHRKESSCGCAGVFNAPSALPAYASVFEEMNALQHLEAFCSLNGPRFYGLPVNEDFVELVRVPFQQPEEISLGNESIIPFLAGQTINWSVKA</sequence>
<keyword id="KW-0378">Hydrolase</keyword>
<keyword id="KW-0479">Metal-binding</keyword>
<keyword id="KW-0665">Pyrimidine biosynthesis</keyword>
<keyword id="KW-0862">Zinc</keyword>
<accession>A1JN45</accession>
<reference key="1">
    <citation type="journal article" date="2006" name="PLoS Genet.">
        <title>The complete genome sequence and comparative genome analysis of the high pathogenicity Yersinia enterocolitica strain 8081.</title>
        <authorList>
            <person name="Thomson N.R."/>
            <person name="Howard S."/>
            <person name="Wren B.W."/>
            <person name="Holden M.T.G."/>
            <person name="Crossman L."/>
            <person name="Challis G.L."/>
            <person name="Churcher C."/>
            <person name="Mungall K."/>
            <person name="Brooks K."/>
            <person name="Chillingworth T."/>
            <person name="Feltwell T."/>
            <person name="Abdellah Z."/>
            <person name="Hauser H."/>
            <person name="Jagels K."/>
            <person name="Maddison M."/>
            <person name="Moule S."/>
            <person name="Sanders M."/>
            <person name="Whitehead S."/>
            <person name="Quail M.A."/>
            <person name="Dougan G."/>
            <person name="Parkhill J."/>
            <person name="Prentice M.B."/>
        </authorList>
    </citation>
    <scope>NUCLEOTIDE SEQUENCE [LARGE SCALE GENOMIC DNA]</scope>
    <source>
        <strain>NCTC 13174 / 8081</strain>
    </source>
</reference>
<evidence type="ECO:0000255" key="1">
    <source>
        <dbReference type="HAMAP-Rule" id="MF_00219"/>
    </source>
</evidence>
<proteinExistence type="inferred from homology"/>
<organism>
    <name type="scientific">Yersinia enterocolitica serotype O:8 / biotype 1B (strain NCTC 13174 / 8081)</name>
    <dbReference type="NCBI Taxonomy" id="393305"/>
    <lineage>
        <taxon>Bacteria</taxon>
        <taxon>Pseudomonadati</taxon>
        <taxon>Pseudomonadota</taxon>
        <taxon>Gammaproteobacteria</taxon>
        <taxon>Enterobacterales</taxon>
        <taxon>Yersiniaceae</taxon>
        <taxon>Yersinia</taxon>
    </lineage>
</organism>
<protein>
    <recommendedName>
        <fullName evidence="1">Dihydroorotase</fullName>
        <shortName evidence="1">DHOase</shortName>
        <ecNumber evidence="1">3.5.2.3</ecNumber>
    </recommendedName>
</protein>
<name>PYRC_YERE8</name>
<gene>
    <name evidence="1" type="primary">pyrC</name>
    <name type="ordered locus">YE1625</name>
</gene>